<organism>
    <name type="scientific">Halobacterium salinarum (strain ATCC 700922 / JCM 11081 / NRC-1)</name>
    <name type="common">Halobacterium halobium</name>
    <dbReference type="NCBI Taxonomy" id="64091"/>
    <lineage>
        <taxon>Archaea</taxon>
        <taxon>Methanobacteriati</taxon>
        <taxon>Methanobacteriota</taxon>
        <taxon>Stenosarchaea group</taxon>
        <taxon>Halobacteria</taxon>
        <taxon>Halobacteriales</taxon>
        <taxon>Halobacteriaceae</taxon>
        <taxon>Halobacterium</taxon>
        <taxon>Halobacterium salinarum NRC-34001</taxon>
    </lineage>
</organism>
<accession>Q9HPW5</accession>
<protein>
    <recommendedName>
        <fullName evidence="1">Histidinol dehydrogenase</fullName>
        <shortName evidence="1">HDH</shortName>
        <ecNumber evidence="1">1.1.1.23</ecNumber>
    </recommendedName>
</protein>
<comment type="function">
    <text evidence="1">Catalyzes the sequential NAD-dependent oxidations of L-histidinol to L-histidinaldehyde and then to L-histidine.</text>
</comment>
<comment type="catalytic activity">
    <reaction evidence="1">
        <text>L-histidinol + 2 NAD(+) + H2O = L-histidine + 2 NADH + 3 H(+)</text>
        <dbReference type="Rhea" id="RHEA:20641"/>
        <dbReference type="ChEBI" id="CHEBI:15377"/>
        <dbReference type="ChEBI" id="CHEBI:15378"/>
        <dbReference type="ChEBI" id="CHEBI:57540"/>
        <dbReference type="ChEBI" id="CHEBI:57595"/>
        <dbReference type="ChEBI" id="CHEBI:57699"/>
        <dbReference type="ChEBI" id="CHEBI:57945"/>
        <dbReference type="EC" id="1.1.1.23"/>
    </reaction>
</comment>
<comment type="cofactor">
    <cofactor evidence="1">
        <name>Zn(2+)</name>
        <dbReference type="ChEBI" id="CHEBI:29105"/>
    </cofactor>
    <text evidence="1">Binds 1 zinc ion per subunit.</text>
</comment>
<comment type="pathway">
    <text evidence="1">Amino-acid biosynthesis; L-histidine biosynthesis; L-histidine from 5-phospho-alpha-D-ribose 1-diphosphate: step 9/9.</text>
</comment>
<comment type="similarity">
    <text evidence="1">Belongs to the histidinol dehydrogenase family.</text>
</comment>
<reference key="1">
    <citation type="journal article" date="2000" name="Proc. Natl. Acad. Sci. U.S.A.">
        <title>Genome sequence of Halobacterium species NRC-1.</title>
        <authorList>
            <person name="Ng W.V."/>
            <person name="Kennedy S.P."/>
            <person name="Mahairas G.G."/>
            <person name="Berquist B."/>
            <person name="Pan M."/>
            <person name="Shukla H.D."/>
            <person name="Lasky S.R."/>
            <person name="Baliga N.S."/>
            <person name="Thorsson V."/>
            <person name="Sbrogna J."/>
            <person name="Swartzell S."/>
            <person name="Weir D."/>
            <person name="Hall J."/>
            <person name="Dahl T.A."/>
            <person name="Welti R."/>
            <person name="Goo Y.A."/>
            <person name="Leithauser B."/>
            <person name="Keller K."/>
            <person name="Cruz R."/>
            <person name="Danson M.J."/>
            <person name="Hough D.W."/>
            <person name="Maddocks D.G."/>
            <person name="Jablonski P.E."/>
            <person name="Krebs M.P."/>
            <person name="Angevine C.M."/>
            <person name="Dale H."/>
            <person name="Isenbarger T.A."/>
            <person name="Peck R.F."/>
            <person name="Pohlschroder M."/>
            <person name="Spudich J.L."/>
            <person name="Jung K.-H."/>
            <person name="Alam M."/>
            <person name="Freitas T."/>
            <person name="Hou S."/>
            <person name="Daniels C.J."/>
            <person name="Dennis P.P."/>
            <person name="Omer A.D."/>
            <person name="Ebhardt H."/>
            <person name="Lowe T.M."/>
            <person name="Liang P."/>
            <person name="Riley M."/>
            <person name="Hood L."/>
            <person name="DasSarma S."/>
        </authorList>
    </citation>
    <scope>NUCLEOTIDE SEQUENCE [LARGE SCALE GENOMIC DNA]</scope>
    <source>
        <strain>ATCC 700922 / JCM 11081 / NRC-1</strain>
    </source>
</reference>
<evidence type="ECO:0000255" key="1">
    <source>
        <dbReference type="HAMAP-Rule" id="MF_01024"/>
    </source>
</evidence>
<dbReference type="EC" id="1.1.1.23" evidence="1"/>
<dbReference type="EMBL" id="AE004437">
    <property type="protein sequence ID" value="AAG19752.1"/>
    <property type="molecule type" value="Genomic_DNA"/>
</dbReference>
<dbReference type="PIR" id="D84298">
    <property type="entry name" value="D84298"/>
</dbReference>
<dbReference type="RefSeq" id="WP_010903049.1">
    <property type="nucleotide sequence ID" value="NC_002607.1"/>
</dbReference>
<dbReference type="SMR" id="Q9HPW5"/>
<dbReference type="FunCoup" id="Q9HPW5">
    <property type="interactions" value="167"/>
</dbReference>
<dbReference type="STRING" id="64091.VNG_1444G"/>
<dbReference type="PaxDb" id="64091-VNG_1444G"/>
<dbReference type="GeneID" id="68694160"/>
<dbReference type="KEGG" id="hal:VNG_1444G"/>
<dbReference type="PATRIC" id="fig|64091.14.peg.1102"/>
<dbReference type="HOGENOM" id="CLU_006732_3_0_2"/>
<dbReference type="InParanoid" id="Q9HPW5"/>
<dbReference type="OrthoDB" id="36308at2157"/>
<dbReference type="PhylomeDB" id="Q9HPW5"/>
<dbReference type="UniPathway" id="UPA00031">
    <property type="reaction ID" value="UER00014"/>
</dbReference>
<dbReference type="Proteomes" id="UP000000554">
    <property type="component" value="Chromosome"/>
</dbReference>
<dbReference type="GO" id="GO:0005737">
    <property type="term" value="C:cytoplasm"/>
    <property type="evidence" value="ECO:0000318"/>
    <property type="project" value="GO_Central"/>
</dbReference>
<dbReference type="GO" id="GO:0004399">
    <property type="term" value="F:histidinol dehydrogenase activity"/>
    <property type="evidence" value="ECO:0000318"/>
    <property type="project" value="GO_Central"/>
</dbReference>
<dbReference type="GO" id="GO:0051287">
    <property type="term" value="F:NAD binding"/>
    <property type="evidence" value="ECO:0007669"/>
    <property type="project" value="InterPro"/>
</dbReference>
<dbReference type="GO" id="GO:0008270">
    <property type="term" value="F:zinc ion binding"/>
    <property type="evidence" value="ECO:0007669"/>
    <property type="project" value="UniProtKB-UniRule"/>
</dbReference>
<dbReference type="GO" id="GO:0000105">
    <property type="term" value="P:L-histidine biosynthetic process"/>
    <property type="evidence" value="ECO:0000318"/>
    <property type="project" value="GO_Central"/>
</dbReference>
<dbReference type="CDD" id="cd06572">
    <property type="entry name" value="Histidinol_dh"/>
    <property type="match status" value="1"/>
</dbReference>
<dbReference type="FunFam" id="3.40.50.1980:FF:000001">
    <property type="entry name" value="Histidinol dehydrogenase"/>
    <property type="match status" value="1"/>
</dbReference>
<dbReference type="Gene3D" id="1.20.5.1300">
    <property type="match status" value="1"/>
</dbReference>
<dbReference type="Gene3D" id="3.40.50.1980">
    <property type="entry name" value="Nitrogenase molybdenum iron protein domain"/>
    <property type="match status" value="2"/>
</dbReference>
<dbReference type="HAMAP" id="MF_01024">
    <property type="entry name" value="HisD"/>
    <property type="match status" value="1"/>
</dbReference>
<dbReference type="InterPro" id="IPR016161">
    <property type="entry name" value="Ald_DH/histidinol_DH"/>
</dbReference>
<dbReference type="InterPro" id="IPR001692">
    <property type="entry name" value="Histidinol_DH_CS"/>
</dbReference>
<dbReference type="InterPro" id="IPR022695">
    <property type="entry name" value="Histidinol_DH_monofunct"/>
</dbReference>
<dbReference type="InterPro" id="IPR012131">
    <property type="entry name" value="Hstdl_DH"/>
</dbReference>
<dbReference type="NCBIfam" id="TIGR00069">
    <property type="entry name" value="hisD"/>
    <property type="match status" value="1"/>
</dbReference>
<dbReference type="PANTHER" id="PTHR21256:SF2">
    <property type="entry name" value="HISTIDINE BIOSYNTHESIS TRIFUNCTIONAL PROTEIN"/>
    <property type="match status" value="1"/>
</dbReference>
<dbReference type="PANTHER" id="PTHR21256">
    <property type="entry name" value="HISTIDINOL DEHYDROGENASE HDH"/>
    <property type="match status" value="1"/>
</dbReference>
<dbReference type="Pfam" id="PF00815">
    <property type="entry name" value="Histidinol_dh"/>
    <property type="match status" value="1"/>
</dbReference>
<dbReference type="PIRSF" id="PIRSF000099">
    <property type="entry name" value="Histidinol_dh"/>
    <property type="match status" value="1"/>
</dbReference>
<dbReference type="PRINTS" id="PR00083">
    <property type="entry name" value="HOLDHDRGNASE"/>
</dbReference>
<dbReference type="SUPFAM" id="SSF53720">
    <property type="entry name" value="ALDH-like"/>
    <property type="match status" value="1"/>
</dbReference>
<dbReference type="PROSITE" id="PS00611">
    <property type="entry name" value="HISOL_DEHYDROGENASE"/>
    <property type="match status" value="1"/>
</dbReference>
<proteinExistence type="inferred from homology"/>
<gene>
    <name evidence="1" type="primary">hisD</name>
    <name type="ordered locus">VNG_1444G</name>
</gene>
<keyword id="KW-0028">Amino-acid biosynthesis</keyword>
<keyword id="KW-0368">Histidine biosynthesis</keyword>
<keyword id="KW-0479">Metal-binding</keyword>
<keyword id="KW-0520">NAD</keyword>
<keyword id="KW-0560">Oxidoreductase</keyword>
<keyword id="KW-1185">Reference proteome</keyword>
<keyword id="KW-0862">Zinc</keyword>
<sequence>MEYEAVADLAPDRRVALFERDAGVDAVRSDVAEILDRVESEGDVALRALASEFDDVEVGNLDVTDEMERAADAVPDDVYDAIEDAAANIRAFHEAQLPDDWRESFAAGRELGRRFRPVRRVGVYAPGGTAAYPSSVLMGVIPAVVAGVEQVAVATPPAETINPVTLAAAHAAGADRVYQVGGAQAIGAFAYGTETVDTVQTVVGPGNKWVTAAKAEVRGDVEIDFLAGPSELLVVADETAEPAFVAADLLAQAEHDPNASVVAVTDDEATAAAITDAVAARLDDRERADTIRAALDNEASGVFVARSMSEAVMFAEEYAAEHLSIQASDDEALLDRIDSAGSVFLGGYAPVAAGDYAAGTNHVLPTNGTARVTGGLSVDTFLRSTTVQRLDREGLAALRETVTTLADAEGLEGHAASVDARFEDE</sequence>
<name>HISX_HALSA</name>
<feature type="chain" id="PRO_0000135892" description="Histidinol dehydrogenase">
    <location>
        <begin position="1"/>
        <end position="425"/>
    </location>
</feature>
<feature type="active site" description="Proton acceptor" evidence="1">
    <location>
        <position position="321"/>
    </location>
</feature>
<feature type="active site" description="Proton acceptor" evidence="1">
    <location>
        <position position="322"/>
    </location>
</feature>
<feature type="binding site" evidence="1">
    <location>
        <position position="124"/>
    </location>
    <ligand>
        <name>NAD(+)</name>
        <dbReference type="ChEBI" id="CHEBI:57540"/>
    </ligand>
</feature>
<feature type="binding site" evidence="1">
    <location>
        <position position="184"/>
    </location>
    <ligand>
        <name>NAD(+)</name>
        <dbReference type="ChEBI" id="CHEBI:57540"/>
    </ligand>
</feature>
<feature type="binding site" evidence="1">
    <location>
        <position position="207"/>
    </location>
    <ligand>
        <name>NAD(+)</name>
        <dbReference type="ChEBI" id="CHEBI:57540"/>
    </ligand>
</feature>
<feature type="binding site" evidence="1">
    <location>
        <position position="230"/>
    </location>
    <ligand>
        <name>substrate</name>
    </ligand>
</feature>
<feature type="binding site" evidence="1">
    <location>
        <position position="252"/>
    </location>
    <ligand>
        <name>substrate</name>
    </ligand>
</feature>
<feature type="binding site" evidence="1">
    <location>
        <position position="252"/>
    </location>
    <ligand>
        <name>Zn(2+)</name>
        <dbReference type="ChEBI" id="CHEBI:29105"/>
    </ligand>
</feature>
<feature type="binding site" evidence="1">
    <location>
        <position position="255"/>
    </location>
    <ligand>
        <name>substrate</name>
    </ligand>
</feature>
<feature type="binding site" evidence="1">
    <location>
        <position position="255"/>
    </location>
    <ligand>
        <name>Zn(2+)</name>
        <dbReference type="ChEBI" id="CHEBI:29105"/>
    </ligand>
</feature>
<feature type="binding site" evidence="1">
    <location>
        <position position="322"/>
    </location>
    <ligand>
        <name>substrate</name>
    </ligand>
</feature>
<feature type="binding site" evidence="1">
    <location>
        <position position="355"/>
    </location>
    <ligand>
        <name>substrate</name>
    </ligand>
</feature>
<feature type="binding site" evidence="1">
    <location>
        <position position="355"/>
    </location>
    <ligand>
        <name>Zn(2+)</name>
        <dbReference type="ChEBI" id="CHEBI:29105"/>
    </ligand>
</feature>
<feature type="binding site" evidence="1">
    <location>
        <position position="409"/>
    </location>
    <ligand>
        <name>substrate</name>
    </ligand>
</feature>
<feature type="binding site" evidence="1">
    <location>
        <position position="414"/>
    </location>
    <ligand>
        <name>substrate</name>
    </ligand>
</feature>
<feature type="binding site" evidence="1">
    <location>
        <position position="414"/>
    </location>
    <ligand>
        <name>Zn(2+)</name>
        <dbReference type="ChEBI" id="CHEBI:29105"/>
    </ligand>
</feature>